<protein>
    <recommendedName>
        <fullName evidence="1">Cell division topological specificity factor</fullName>
    </recommendedName>
</protein>
<comment type="function">
    <text evidence="1">Prevents the cell division inhibition by proteins MinC and MinD at internal division sites while permitting inhibition at polar sites. This ensures cell division at the proper site by restricting the formation of a division septum at the midpoint of the long axis of the cell.</text>
</comment>
<comment type="similarity">
    <text evidence="1">Belongs to the MinE family.</text>
</comment>
<name>MINE_CHRSD</name>
<dbReference type="EMBL" id="CP000285">
    <property type="protein sequence ID" value="ABE60369.1"/>
    <property type="molecule type" value="Genomic_DNA"/>
</dbReference>
<dbReference type="RefSeq" id="WP_011508315.1">
    <property type="nucleotide sequence ID" value="NC_007963.1"/>
</dbReference>
<dbReference type="SMR" id="Q1QT39"/>
<dbReference type="STRING" id="290398.Csal_3025"/>
<dbReference type="GeneID" id="95335713"/>
<dbReference type="KEGG" id="csa:Csal_3025"/>
<dbReference type="eggNOG" id="COG0851">
    <property type="taxonomic scope" value="Bacteria"/>
</dbReference>
<dbReference type="HOGENOM" id="CLU_137929_2_1_6"/>
<dbReference type="OrthoDB" id="9802655at2"/>
<dbReference type="Proteomes" id="UP000000239">
    <property type="component" value="Chromosome"/>
</dbReference>
<dbReference type="GO" id="GO:0051301">
    <property type="term" value="P:cell division"/>
    <property type="evidence" value="ECO:0007669"/>
    <property type="project" value="UniProtKB-KW"/>
</dbReference>
<dbReference type="GO" id="GO:0032955">
    <property type="term" value="P:regulation of division septum assembly"/>
    <property type="evidence" value="ECO:0007669"/>
    <property type="project" value="InterPro"/>
</dbReference>
<dbReference type="FunFam" id="3.30.1070.10:FF:000001">
    <property type="entry name" value="Cell division topological specificity factor"/>
    <property type="match status" value="1"/>
</dbReference>
<dbReference type="Gene3D" id="3.30.1070.10">
    <property type="entry name" value="Cell division topological specificity factor MinE"/>
    <property type="match status" value="1"/>
</dbReference>
<dbReference type="HAMAP" id="MF_00262">
    <property type="entry name" value="MinE"/>
    <property type="match status" value="1"/>
</dbReference>
<dbReference type="InterPro" id="IPR005527">
    <property type="entry name" value="MinE"/>
</dbReference>
<dbReference type="InterPro" id="IPR036707">
    <property type="entry name" value="MinE_sf"/>
</dbReference>
<dbReference type="NCBIfam" id="TIGR01215">
    <property type="entry name" value="minE"/>
    <property type="match status" value="1"/>
</dbReference>
<dbReference type="NCBIfam" id="NF001422">
    <property type="entry name" value="PRK00296.1"/>
    <property type="match status" value="1"/>
</dbReference>
<dbReference type="Pfam" id="PF03776">
    <property type="entry name" value="MinE"/>
    <property type="match status" value="1"/>
</dbReference>
<dbReference type="SUPFAM" id="SSF55229">
    <property type="entry name" value="Cell division protein MinE topological specificity domain"/>
    <property type="match status" value="1"/>
</dbReference>
<proteinExistence type="inferred from homology"/>
<accession>Q1QT39</accession>
<keyword id="KW-0131">Cell cycle</keyword>
<keyword id="KW-0132">Cell division</keyword>
<keyword id="KW-1185">Reference proteome</keyword>
<feature type="chain" id="PRO_0000298098" description="Cell division topological specificity factor">
    <location>
        <begin position="1"/>
        <end position="84"/>
    </location>
</feature>
<evidence type="ECO:0000255" key="1">
    <source>
        <dbReference type="HAMAP-Rule" id="MF_00262"/>
    </source>
</evidence>
<organism>
    <name type="scientific">Chromohalobacter salexigens (strain ATCC BAA-138 / DSM 3043 / CIP 106854 / NCIMB 13768 / 1H11)</name>
    <dbReference type="NCBI Taxonomy" id="290398"/>
    <lineage>
        <taxon>Bacteria</taxon>
        <taxon>Pseudomonadati</taxon>
        <taxon>Pseudomonadota</taxon>
        <taxon>Gammaproteobacteria</taxon>
        <taxon>Oceanospirillales</taxon>
        <taxon>Halomonadaceae</taxon>
        <taxon>Chromohalobacter</taxon>
    </lineage>
</organism>
<gene>
    <name evidence="1" type="primary">minE</name>
    <name type="ordered locus">Csal_3025</name>
</gene>
<reference key="1">
    <citation type="journal article" date="2011" name="Stand. Genomic Sci.">
        <title>Complete genome sequence of the halophilic and highly halotolerant Chromohalobacter salexigens type strain (1H11(T)).</title>
        <authorList>
            <person name="Copeland A."/>
            <person name="O'Connor K."/>
            <person name="Lucas S."/>
            <person name="Lapidus A."/>
            <person name="Berry K.W."/>
            <person name="Detter J.C."/>
            <person name="Del Rio T.G."/>
            <person name="Hammon N."/>
            <person name="Dalin E."/>
            <person name="Tice H."/>
            <person name="Pitluck S."/>
            <person name="Bruce D."/>
            <person name="Goodwin L."/>
            <person name="Han C."/>
            <person name="Tapia R."/>
            <person name="Saunders E."/>
            <person name="Schmutz J."/>
            <person name="Brettin T."/>
            <person name="Larimer F."/>
            <person name="Land M."/>
            <person name="Hauser L."/>
            <person name="Vargas C."/>
            <person name="Nieto J.J."/>
            <person name="Kyrpides N.C."/>
            <person name="Ivanova N."/>
            <person name="Goker M."/>
            <person name="Klenk H.P."/>
            <person name="Csonka L.N."/>
            <person name="Woyke T."/>
        </authorList>
    </citation>
    <scope>NUCLEOTIDE SEQUENCE [LARGE SCALE GENOMIC DNA]</scope>
    <source>
        <strain>ATCC BAA-138 / DSM 3043 / CIP 106854 / NCIMB 13768 / 1H11</strain>
    </source>
</reference>
<sequence length="84" mass="9951">MKLLEFLKRERKKSASVAKERLQIIVAHQRGQRDQPDYMPMLEKELLEVIRRYVQVDQDAINISLDRDNDCSVLELNVTLPRDE</sequence>